<evidence type="ECO:0000255" key="1">
    <source>
        <dbReference type="PROSITE-ProRule" id="PRU00108"/>
    </source>
</evidence>
<evidence type="ECO:0000255" key="2">
    <source>
        <dbReference type="PROSITE-ProRule" id="PRU00530"/>
    </source>
</evidence>
<evidence type="ECO:0000256" key="3">
    <source>
        <dbReference type="SAM" id="MobiDB-lite"/>
    </source>
</evidence>
<evidence type="ECO:0000269" key="4">
    <source>
    </source>
</evidence>
<evidence type="ECO:0000269" key="5">
    <source>
    </source>
</evidence>
<evidence type="ECO:0000305" key="6"/>
<accession>P79746</accession>
<accession>B0S5F1</accession>
<proteinExistence type="evidence at protein level"/>
<organism>
    <name type="scientific">Danio rerio</name>
    <name type="common">Zebrafish</name>
    <name type="synonym">Brachydanio rerio</name>
    <dbReference type="NCBI Taxonomy" id="7955"/>
    <lineage>
        <taxon>Eukaryota</taxon>
        <taxon>Metazoa</taxon>
        <taxon>Chordata</taxon>
        <taxon>Craniata</taxon>
        <taxon>Vertebrata</taxon>
        <taxon>Euteleostomi</taxon>
        <taxon>Actinopterygii</taxon>
        <taxon>Neopterygii</taxon>
        <taxon>Teleostei</taxon>
        <taxon>Ostariophysi</taxon>
        <taxon>Cypriniformes</taxon>
        <taxon>Danionidae</taxon>
        <taxon>Danioninae</taxon>
        <taxon>Danio</taxon>
    </lineage>
</organism>
<comment type="function">
    <text>Transcription factor that may play important roles in patterning the embryonic brain.</text>
</comment>
<comment type="subcellular location">
    <subcellularLocation>
        <location evidence="1 2">Nucleus</location>
    </subcellularLocation>
</comment>
<comment type="tissue specificity">
    <text evidence="5">Predominantly expressed in the central nervous system, with strong expression in the cerebellum.</text>
</comment>
<comment type="developmental stage">
    <text evidence="5">Detected after completion of the gastrula period. Maximal expression after 1 to 2 days of development.</text>
</comment>
<comment type="similarity">
    <text evidence="6">Belongs to the POU transcription factor family. Class-3 subfamily.</text>
</comment>
<protein>
    <recommendedName>
        <fullName>POU domain, class 3, transcription factor 2</fullName>
    </recommendedName>
    <alternativeName>
        <fullName>POU domain protein 47</fullName>
        <shortName>ZP-47</shortName>
    </alternativeName>
</protein>
<name>PO3F2_DANRE</name>
<keyword id="KW-0217">Developmental protein</keyword>
<keyword id="KW-0238">DNA-binding</keyword>
<keyword id="KW-0371">Homeobox</keyword>
<keyword id="KW-0539">Nucleus</keyword>
<keyword id="KW-0597">Phosphoprotein</keyword>
<keyword id="KW-1185">Reference proteome</keyword>
<keyword id="KW-0804">Transcription</keyword>
<keyword id="KW-0805">Transcription regulation</keyword>
<sequence>MATTASNHYNILTSSPSIVHSEPGSMQQATAYRDAQTLLQSDYSLQSNSHPLSHAHQWITALSHGEGGPWSSSPLGEQDIKPAVQSPRDEMHNSSNLQHQSRPPHLVHQTHGNHHDSRAWRTTTAAHIPSMATSNGQSLIYSQPSFSVNGLIPGSGQGIHHHSMRDAHEDHHSPHLSDHGHPPSQHQHQSHQSHHDHSDEDTPTSDDLEQFAKQFKQRRIKLGFTQADVGLALGTLYGNVFSQTTICRFEALQLSFKNMCKLKPLLNKWLEEADSTSGSPTSLDKIAAQGRKRKKRTSIEVSVKGALESHFLKCPKPAASEITSLADSLQLEKEVVRVWFCNRRQKEKRMTPPGGPLPGTEDVYGDTPPHHGVQTPVQ</sequence>
<feature type="chain" id="PRO_0000100772" description="POU domain, class 3, transcription factor 2">
    <location>
        <begin position="1"/>
        <end position="378"/>
    </location>
</feature>
<feature type="domain" description="POU-specific" evidence="2">
    <location>
        <begin position="200"/>
        <end position="274"/>
    </location>
</feature>
<feature type="DNA-binding region" description="Homeobox" evidence="1">
    <location>
        <begin position="292"/>
        <end position="351"/>
    </location>
</feature>
<feature type="region of interest" description="Disordered" evidence="3">
    <location>
        <begin position="1"/>
        <end position="28"/>
    </location>
</feature>
<feature type="region of interest" description="Disordered" evidence="3">
    <location>
        <begin position="86"/>
        <end position="118"/>
    </location>
</feature>
<feature type="region of interest" description="Disordered" evidence="3">
    <location>
        <begin position="151"/>
        <end position="205"/>
    </location>
</feature>
<feature type="region of interest" description="Disordered" evidence="3">
    <location>
        <begin position="347"/>
        <end position="378"/>
    </location>
</feature>
<feature type="compositionally biased region" description="Basic and acidic residues" evidence="3">
    <location>
        <begin position="164"/>
        <end position="181"/>
    </location>
</feature>
<feature type="modified residue" description="Phosphoserine" evidence="4">
    <location>
        <position position="279"/>
    </location>
</feature>
<gene>
    <name type="primary">pou3f2</name>
    <name type="synonym">pou47</name>
    <name type="synonym">zp47</name>
    <name type="synonym">zp47pou</name>
    <name type="ORF">si:ch211-201n18.1</name>
</gene>
<reference key="1">
    <citation type="journal article" date="1996" name="Nucleic Acids Res.">
        <title>Class III POU genes of zebrafish are predominantly expressed in the central nervous system.</title>
        <authorList>
            <person name="Spaniol P."/>
            <person name="Bornmann C."/>
            <person name="Hauptmann G."/>
            <person name="Gerster T."/>
        </authorList>
    </citation>
    <scope>NUCLEOTIDE SEQUENCE [MRNA]</scope>
    <scope>TISSUE SPECIFICITY</scope>
    <scope>DEVELOPMENTAL STAGE</scope>
    <source>
        <tissue>Embryo</tissue>
    </source>
</reference>
<reference key="2">
    <citation type="journal article" date="2013" name="Nature">
        <title>The zebrafish reference genome sequence and its relationship to the human genome.</title>
        <authorList>
            <person name="Howe K."/>
            <person name="Clark M.D."/>
            <person name="Torroja C.F."/>
            <person name="Torrance J."/>
            <person name="Berthelot C."/>
            <person name="Muffato M."/>
            <person name="Collins J.E."/>
            <person name="Humphray S."/>
            <person name="McLaren K."/>
            <person name="Matthews L."/>
            <person name="McLaren S."/>
            <person name="Sealy I."/>
            <person name="Caccamo M."/>
            <person name="Churcher C."/>
            <person name="Scott C."/>
            <person name="Barrett J.C."/>
            <person name="Koch R."/>
            <person name="Rauch G.J."/>
            <person name="White S."/>
            <person name="Chow W."/>
            <person name="Kilian B."/>
            <person name="Quintais L.T."/>
            <person name="Guerra-Assuncao J.A."/>
            <person name="Zhou Y."/>
            <person name="Gu Y."/>
            <person name="Yen J."/>
            <person name="Vogel J.H."/>
            <person name="Eyre T."/>
            <person name="Redmond S."/>
            <person name="Banerjee R."/>
            <person name="Chi J."/>
            <person name="Fu B."/>
            <person name="Langley E."/>
            <person name="Maguire S.F."/>
            <person name="Laird G.K."/>
            <person name="Lloyd D."/>
            <person name="Kenyon E."/>
            <person name="Donaldson S."/>
            <person name="Sehra H."/>
            <person name="Almeida-King J."/>
            <person name="Loveland J."/>
            <person name="Trevanion S."/>
            <person name="Jones M."/>
            <person name="Quail M."/>
            <person name="Willey D."/>
            <person name="Hunt A."/>
            <person name="Burton J."/>
            <person name="Sims S."/>
            <person name="McLay K."/>
            <person name="Plumb B."/>
            <person name="Davis J."/>
            <person name="Clee C."/>
            <person name="Oliver K."/>
            <person name="Clark R."/>
            <person name="Riddle C."/>
            <person name="Elliot D."/>
            <person name="Threadgold G."/>
            <person name="Harden G."/>
            <person name="Ware D."/>
            <person name="Begum S."/>
            <person name="Mortimore B."/>
            <person name="Kerry G."/>
            <person name="Heath P."/>
            <person name="Phillimore B."/>
            <person name="Tracey A."/>
            <person name="Corby N."/>
            <person name="Dunn M."/>
            <person name="Johnson C."/>
            <person name="Wood J."/>
            <person name="Clark S."/>
            <person name="Pelan S."/>
            <person name="Griffiths G."/>
            <person name="Smith M."/>
            <person name="Glithero R."/>
            <person name="Howden P."/>
            <person name="Barker N."/>
            <person name="Lloyd C."/>
            <person name="Stevens C."/>
            <person name="Harley J."/>
            <person name="Holt K."/>
            <person name="Panagiotidis G."/>
            <person name="Lovell J."/>
            <person name="Beasley H."/>
            <person name="Henderson C."/>
            <person name="Gordon D."/>
            <person name="Auger K."/>
            <person name="Wright D."/>
            <person name="Collins J."/>
            <person name="Raisen C."/>
            <person name="Dyer L."/>
            <person name="Leung K."/>
            <person name="Robertson L."/>
            <person name="Ambridge K."/>
            <person name="Leongamornlert D."/>
            <person name="McGuire S."/>
            <person name="Gilderthorp R."/>
            <person name="Griffiths C."/>
            <person name="Manthravadi D."/>
            <person name="Nichol S."/>
            <person name="Barker G."/>
            <person name="Whitehead S."/>
            <person name="Kay M."/>
            <person name="Brown J."/>
            <person name="Murnane C."/>
            <person name="Gray E."/>
            <person name="Humphries M."/>
            <person name="Sycamore N."/>
            <person name="Barker D."/>
            <person name="Saunders D."/>
            <person name="Wallis J."/>
            <person name="Babbage A."/>
            <person name="Hammond S."/>
            <person name="Mashreghi-Mohammadi M."/>
            <person name="Barr L."/>
            <person name="Martin S."/>
            <person name="Wray P."/>
            <person name="Ellington A."/>
            <person name="Matthews N."/>
            <person name="Ellwood M."/>
            <person name="Woodmansey R."/>
            <person name="Clark G."/>
            <person name="Cooper J."/>
            <person name="Tromans A."/>
            <person name="Grafham D."/>
            <person name="Skuce C."/>
            <person name="Pandian R."/>
            <person name="Andrews R."/>
            <person name="Harrison E."/>
            <person name="Kimberley A."/>
            <person name="Garnett J."/>
            <person name="Fosker N."/>
            <person name="Hall R."/>
            <person name="Garner P."/>
            <person name="Kelly D."/>
            <person name="Bird C."/>
            <person name="Palmer S."/>
            <person name="Gehring I."/>
            <person name="Berger A."/>
            <person name="Dooley C.M."/>
            <person name="Ersan-Urun Z."/>
            <person name="Eser C."/>
            <person name="Geiger H."/>
            <person name="Geisler M."/>
            <person name="Karotki L."/>
            <person name="Kirn A."/>
            <person name="Konantz J."/>
            <person name="Konantz M."/>
            <person name="Oberlander M."/>
            <person name="Rudolph-Geiger S."/>
            <person name="Teucke M."/>
            <person name="Lanz C."/>
            <person name="Raddatz G."/>
            <person name="Osoegawa K."/>
            <person name="Zhu B."/>
            <person name="Rapp A."/>
            <person name="Widaa S."/>
            <person name="Langford C."/>
            <person name="Yang F."/>
            <person name="Schuster S.C."/>
            <person name="Carter N.P."/>
            <person name="Harrow J."/>
            <person name="Ning Z."/>
            <person name="Herrero J."/>
            <person name="Searle S.M."/>
            <person name="Enright A."/>
            <person name="Geisler R."/>
            <person name="Plasterk R.H."/>
            <person name="Lee C."/>
            <person name="Westerfield M."/>
            <person name="de Jong P.J."/>
            <person name="Zon L.I."/>
            <person name="Postlethwait J.H."/>
            <person name="Nusslein-Volhard C."/>
            <person name="Hubbard T.J."/>
            <person name="Roest Crollius H."/>
            <person name="Rogers J."/>
            <person name="Stemple D.L."/>
        </authorList>
    </citation>
    <scope>NUCLEOTIDE SEQUENCE [LARGE SCALE GENOMIC DNA]</scope>
    <source>
        <strain>Tuebingen</strain>
    </source>
</reference>
<reference key="3">
    <citation type="submission" date="2004-03" db="EMBL/GenBank/DDBJ databases">
        <authorList>
            <consortium name="NIH - Zebrafish Gene Collection (ZGC) project"/>
        </authorList>
    </citation>
    <scope>NUCLEOTIDE SEQUENCE [LARGE SCALE MRNA]</scope>
    <source>
        <tissue>Embryo</tissue>
    </source>
</reference>
<reference key="4">
    <citation type="journal article" date="2008" name="J. Proteome Res.">
        <title>Online automated in vivo zebrafish phosphoproteomics: from large-scale analysis down to a single embryo.</title>
        <authorList>
            <person name="Lemeer S."/>
            <person name="Pinkse M.W.H."/>
            <person name="Mohammed S."/>
            <person name="van Breukelen B."/>
            <person name="den Hertog J."/>
            <person name="Slijper M."/>
            <person name="Heck A.J.R."/>
        </authorList>
    </citation>
    <scope>PHOSPHORYLATION [LARGE SCALE ANALYSIS] AT SER-279</scope>
    <scope>IDENTIFICATION BY MASS SPECTROMETRY</scope>
    <source>
        <tissue>Embryo</tissue>
    </source>
</reference>
<dbReference type="EMBL" id="Y07905">
    <property type="protein sequence ID" value="CAA69211.1"/>
    <property type="molecule type" value="mRNA"/>
</dbReference>
<dbReference type="EMBL" id="BX247875">
    <property type="protein sequence ID" value="CAQ15526.1"/>
    <property type="molecule type" value="Genomic_DNA"/>
</dbReference>
<dbReference type="EMBL" id="BC067373">
    <property type="protein sequence ID" value="AAH67373.1"/>
    <property type="molecule type" value="mRNA"/>
</dbReference>
<dbReference type="RefSeq" id="NP_571235.1">
    <property type="nucleotide sequence ID" value="NM_131160.1"/>
</dbReference>
<dbReference type="SMR" id="P79746"/>
<dbReference type="FunCoup" id="P79746">
    <property type="interactions" value="302"/>
</dbReference>
<dbReference type="STRING" id="7955.ENSDARP00000087682"/>
<dbReference type="iPTMnet" id="P79746"/>
<dbReference type="PaxDb" id="7955-ENSDARP00000087682"/>
<dbReference type="Ensembl" id="ENSDART00000093250">
    <property type="protein sequence ID" value="ENSDARP00000087682"/>
    <property type="gene ID" value="ENSDARG00000076262"/>
</dbReference>
<dbReference type="Ensembl" id="ENSDART00000186291">
    <property type="protein sequence ID" value="ENSDARP00000155257"/>
    <property type="gene ID" value="ENSDARG00000112713"/>
</dbReference>
<dbReference type="GeneID" id="30397"/>
<dbReference type="KEGG" id="dre:30397"/>
<dbReference type="AGR" id="ZFIN:ZDB-GENE-980526-370"/>
<dbReference type="CTD" id="30397"/>
<dbReference type="ZFIN" id="ZDB-GENE-980526-370">
    <property type="gene designation" value="pou3f2b"/>
</dbReference>
<dbReference type="eggNOG" id="KOG3802">
    <property type="taxonomic scope" value="Eukaryota"/>
</dbReference>
<dbReference type="HOGENOM" id="CLU_013065_1_2_1"/>
<dbReference type="InParanoid" id="P79746"/>
<dbReference type="OMA" id="CEPPLMR"/>
<dbReference type="OrthoDB" id="6358449at2759"/>
<dbReference type="PhylomeDB" id="P79746"/>
<dbReference type="TreeFam" id="TF316413"/>
<dbReference type="PRO" id="PR:P79746"/>
<dbReference type="Proteomes" id="UP000000437">
    <property type="component" value="Alternate scaffold 16"/>
</dbReference>
<dbReference type="Proteomes" id="UP000000437">
    <property type="component" value="Chromosome 16"/>
</dbReference>
<dbReference type="Bgee" id="ENSDARG00000076262">
    <property type="expression patterns" value="Expressed in brain and 11 other cell types or tissues"/>
</dbReference>
<dbReference type="GO" id="GO:0005634">
    <property type="term" value="C:nucleus"/>
    <property type="evidence" value="ECO:0007669"/>
    <property type="project" value="UniProtKB-SubCell"/>
</dbReference>
<dbReference type="GO" id="GO:0000981">
    <property type="term" value="F:DNA-binding transcription factor activity, RNA polymerase II-specific"/>
    <property type="evidence" value="ECO:0000318"/>
    <property type="project" value="GO_Central"/>
</dbReference>
<dbReference type="GO" id="GO:0000978">
    <property type="term" value="F:RNA polymerase II cis-regulatory region sequence-specific DNA binding"/>
    <property type="evidence" value="ECO:0000318"/>
    <property type="project" value="GO_Central"/>
</dbReference>
<dbReference type="GO" id="GO:0007420">
    <property type="term" value="P:brain development"/>
    <property type="evidence" value="ECO:0007669"/>
    <property type="project" value="InterPro"/>
</dbReference>
<dbReference type="GO" id="GO:0001885">
    <property type="term" value="P:endothelial cell development"/>
    <property type="evidence" value="ECO:0000315"/>
    <property type="project" value="ZFIN"/>
</dbReference>
<dbReference type="GO" id="GO:0006357">
    <property type="term" value="P:regulation of transcription by RNA polymerase II"/>
    <property type="evidence" value="ECO:0000318"/>
    <property type="project" value="GO_Central"/>
</dbReference>
<dbReference type="CDD" id="cd00086">
    <property type="entry name" value="homeodomain"/>
    <property type="match status" value="1"/>
</dbReference>
<dbReference type="FunFam" id="1.10.10.60:FF:000005">
    <property type="entry name" value="POU domain protein"/>
    <property type="match status" value="1"/>
</dbReference>
<dbReference type="FunFam" id="1.10.260.40:FF:000001">
    <property type="entry name" value="POU domain protein"/>
    <property type="match status" value="1"/>
</dbReference>
<dbReference type="Gene3D" id="1.10.10.60">
    <property type="entry name" value="Homeodomain-like"/>
    <property type="match status" value="1"/>
</dbReference>
<dbReference type="Gene3D" id="1.10.260.40">
    <property type="entry name" value="lambda repressor-like DNA-binding domains"/>
    <property type="match status" value="1"/>
</dbReference>
<dbReference type="InterPro" id="IPR001356">
    <property type="entry name" value="HD"/>
</dbReference>
<dbReference type="InterPro" id="IPR017970">
    <property type="entry name" value="Homeobox_CS"/>
</dbReference>
<dbReference type="InterPro" id="IPR009057">
    <property type="entry name" value="Homeodomain-like_sf"/>
</dbReference>
<dbReference type="InterPro" id="IPR010982">
    <property type="entry name" value="Lambda_DNA-bd_dom_sf"/>
</dbReference>
<dbReference type="InterPro" id="IPR013847">
    <property type="entry name" value="POU"/>
</dbReference>
<dbReference type="InterPro" id="IPR000327">
    <property type="entry name" value="POU_dom"/>
</dbReference>
<dbReference type="InterPro" id="IPR050255">
    <property type="entry name" value="POU_domain_TF"/>
</dbReference>
<dbReference type="InterPro" id="IPR016362">
    <property type="entry name" value="TF_POU_3"/>
</dbReference>
<dbReference type="PANTHER" id="PTHR11636">
    <property type="entry name" value="POU DOMAIN"/>
    <property type="match status" value="1"/>
</dbReference>
<dbReference type="PANTHER" id="PTHR11636:SF115">
    <property type="entry name" value="POU DOMAIN, CLASS 3, TRANSCRIPTION FACTOR 2"/>
    <property type="match status" value="1"/>
</dbReference>
<dbReference type="Pfam" id="PF00046">
    <property type="entry name" value="Homeodomain"/>
    <property type="match status" value="1"/>
</dbReference>
<dbReference type="Pfam" id="PF00157">
    <property type="entry name" value="Pou"/>
    <property type="match status" value="1"/>
</dbReference>
<dbReference type="PIRSF" id="PIRSF002629">
    <property type="entry name" value="Transcription_factor_POU"/>
    <property type="match status" value="1"/>
</dbReference>
<dbReference type="PRINTS" id="PR00028">
    <property type="entry name" value="POUDOMAIN"/>
</dbReference>
<dbReference type="SMART" id="SM00389">
    <property type="entry name" value="HOX"/>
    <property type="match status" value="1"/>
</dbReference>
<dbReference type="SMART" id="SM00352">
    <property type="entry name" value="POU"/>
    <property type="match status" value="1"/>
</dbReference>
<dbReference type="SUPFAM" id="SSF46689">
    <property type="entry name" value="Homeodomain-like"/>
    <property type="match status" value="1"/>
</dbReference>
<dbReference type="SUPFAM" id="SSF47413">
    <property type="entry name" value="lambda repressor-like DNA-binding domains"/>
    <property type="match status" value="1"/>
</dbReference>
<dbReference type="PROSITE" id="PS00027">
    <property type="entry name" value="HOMEOBOX_1"/>
    <property type="match status" value="1"/>
</dbReference>
<dbReference type="PROSITE" id="PS50071">
    <property type="entry name" value="HOMEOBOX_2"/>
    <property type="match status" value="1"/>
</dbReference>
<dbReference type="PROSITE" id="PS00035">
    <property type="entry name" value="POU_1"/>
    <property type="match status" value="1"/>
</dbReference>
<dbReference type="PROSITE" id="PS00465">
    <property type="entry name" value="POU_2"/>
    <property type="match status" value="1"/>
</dbReference>
<dbReference type="PROSITE" id="PS51179">
    <property type="entry name" value="POU_3"/>
    <property type="match status" value="1"/>
</dbReference>